<comment type="function">
    <text evidence="1">Required for gamma-tubulin complex recruitment to the microtubule organizing centers (MTOCs) (By similarity). During mitosis, modulates gamma-tubulin complex localization, spindle stability and chromosomal segregation. Necessary for gametophyte development and embryogenesis.</text>
</comment>
<comment type="subunit">
    <text evidence="3 4 5 6">Homo- and heteromultimer. Part of the gamma-tubulin complex. Interacts with TUBB2/TUBB3, GIP2, GCP3 and TSA1 (via C-terminal domain).</text>
</comment>
<comment type="interaction">
    <interactant intactId="EBI-1573928">
        <id>Q9M0N8</id>
    </interactant>
    <interactant intactId="EBI-1573912">
        <id>Q56YW9</id>
        <label>TUBB2</label>
    </interactant>
    <organismsDiffer>false</organismsDiffer>
    <experiments>3</experiments>
</comment>
<comment type="subcellular location">
    <subcellularLocation>
        <location evidence="2">Cytoplasm</location>
        <location evidence="2">Cytoskeleton</location>
        <location evidence="2">Microtubule organizing center</location>
    </subcellularLocation>
    <subcellularLocation>
        <location>Cytoplasm</location>
        <location>Cytoskeleton</location>
        <location>Spindle</location>
    </subcellularLocation>
    <subcellularLocation>
        <location>Nucleus</location>
    </subcellularLocation>
    <subcellularLocation>
        <location>Cytoplasm</location>
        <location>Cytoskeleton</location>
        <location>Phragmoplast</location>
    </subcellularLocation>
    <subcellularLocation>
        <location>Nucleus envelope</location>
    </subcellularLocation>
    <text>Reorganized from the nucleus to the prospindle and the preprophase band in late G2. After nuclear envelope breakdown, localized on spindle and phragmoplast microtubules (MTs) and on the reforming nuclear envelope of daughter cells. Present in mitotic microtubule arrays. In interphase cortical arrays, gamma-tubulin complexes are preferentially recruited to existing microtubules, from which new microtubules are efficiently nucleated.</text>
</comment>
<comment type="tissue specificity">
    <text evidence="4 5">Mostly expressed in siliques and flowers, and, to a lower extent, in leaves, roots and seedlings, with highest levels in young tissues and meristematic cells, and the vasculature.</text>
</comment>
<comment type="disruption phenotype">
    <text evidence="4 5">In the gip1 gip2 double mutants, embryonic lethality and impaired development of male gametophytes, severe growth defects and sterility, characterized by microtubule (MT) misorganization and abnormal spindle polarity, resulting in ploidy defects.</text>
</comment>
<comment type="similarity">
    <text evidence="7">Belongs to the MOZART1 family.</text>
</comment>
<gene>
    <name type="primary">GIP1</name>
    <name type="synonym">GIP1B</name>
    <name type="ordered locus">At4g09550</name>
    <name type="ORF">T15G18.30</name>
</gene>
<dbReference type="EMBL" id="AL161515">
    <property type="protein sequence ID" value="CAB78078.1"/>
    <property type="molecule type" value="Genomic_DNA"/>
</dbReference>
<dbReference type="EMBL" id="CP002687">
    <property type="protein sequence ID" value="AEE82764.1"/>
    <property type="molecule type" value="Genomic_DNA"/>
</dbReference>
<dbReference type="EMBL" id="CP002687">
    <property type="protein sequence ID" value="ANM66685.1"/>
    <property type="molecule type" value="Genomic_DNA"/>
</dbReference>
<dbReference type="EMBL" id="BT010618">
    <property type="protein sequence ID" value="AAQ89640.1"/>
    <property type="molecule type" value="mRNA"/>
</dbReference>
<dbReference type="EMBL" id="AK175417">
    <property type="protein sequence ID" value="BAD43180.1"/>
    <property type="molecule type" value="mRNA"/>
</dbReference>
<dbReference type="PIR" id="E85097">
    <property type="entry name" value="E85097"/>
</dbReference>
<dbReference type="RefSeq" id="NP_001328567.1">
    <property type="nucleotide sequence ID" value="NM_001340622.1"/>
</dbReference>
<dbReference type="RefSeq" id="NP_192693.1">
    <property type="nucleotide sequence ID" value="NM_117023.4"/>
</dbReference>
<dbReference type="PCDDB" id="Q9M0N8"/>
<dbReference type="SMR" id="Q9M0N8"/>
<dbReference type="BioGRID" id="11838">
    <property type="interactions" value="4"/>
</dbReference>
<dbReference type="FunCoup" id="Q9M0N8">
    <property type="interactions" value="2081"/>
</dbReference>
<dbReference type="IntAct" id="Q9M0N8">
    <property type="interactions" value="1"/>
</dbReference>
<dbReference type="STRING" id="3702.Q9M0N8"/>
<dbReference type="PaxDb" id="3702-AT4G09550.1"/>
<dbReference type="ProteomicsDB" id="251011"/>
<dbReference type="DNASU" id="826539"/>
<dbReference type="EnsemblPlants" id="AT4G09550.1">
    <property type="protein sequence ID" value="AT4G09550.1"/>
    <property type="gene ID" value="AT4G09550"/>
</dbReference>
<dbReference type="EnsemblPlants" id="AT4G09550.2">
    <property type="protein sequence ID" value="AT4G09550.2"/>
    <property type="gene ID" value="AT4G09550"/>
</dbReference>
<dbReference type="GeneID" id="826539"/>
<dbReference type="Gramene" id="AT4G09550.1">
    <property type="protein sequence ID" value="AT4G09550.1"/>
    <property type="gene ID" value="AT4G09550"/>
</dbReference>
<dbReference type="Gramene" id="AT4G09550.2">
    <property type="protein sequence ID" value="AT4G09550.2"/>
    <property type="gene ID" value="AT4G09550"/>
</dbReference>
<dbReference type="KEGG" id="ath:AT4G09550"/>
<dbReference type="Araport" id="AT4G09550"/>
<dbReference type="TAIR" id="AT4G09550">
    <property type="gene designation" value="GIP1"/>
</dbReference>
<dbReference type="eggNOG" id="ENOG502S6UI">
    <property type="taxonomic scope" value="Eukaryota"/>
</dbReference>
<dbReference type="HOGENOM" id="CLU_160285_3_0_1"/>
<dbReference type="InParanoid" id="Q9M0N8"/>
<dbReference type="OMA" id="LSICVGM"/>
<dbReference type="OrthoDB" id="48571at2759"/>
<dbReference type="PhylomeDB" id="Q9M0N8"/>
<dbReference type="CD-CODE" id="33FCD62D">
    <property type="entry name" value="Centrosome"/>
</dbReference>
<dbReference type="PRO" id="PR:Q9M0N8"/>
<dbReference type="Proteomes" id="UP000006548">
    <property type="component" value="Chromosome 4"/>
</dbReference>
<dbReference type="ExpressionAtlas" id="Q9M0N8">
    <property type="expression patterns" value="baseline and differential"/>
</dbReference>
<dbReference type="GO" id="GO:0000930">
    <property type="term" value="C:gamma-tubulin complex"/>
    <property type="evidence" value="ECO:0000314"/>
    <property type="project" value="TAIR"/>
</dbReference>
<dbReference type="GO" id="GO:0000931">
    <property type="term" value="C:gamma-tubulin ring complex"/>
    <property type="evidence" value="ECO:0007669"/>
    <property type="project" value="InterPro"/>
</dbReference>
<dbReference type="GO" id="GO:0000776">
    <property type="term" value="C:kinetochore"/>
    <property type="evidence" value="ECO:0000314"/>
    <property type="project" value="TAIR"/>
</dbReference>
<dbReference type="GO" id="GO:0005828">
    <property type="term" value="C:kinetochore microtubule"/>
    <property type="evidence" value="ECO:0000314"/>
    <property type="project" value="TAIR"/>
</dbReference>
<dbReference type="GO" id="GO:0072686">
    <property type="term" value="C:mitotic spindle"/>
    <property type="evidence" value="ECO:0000314"/>
    <property type="project" value="TAIR"/>
</dbReference>
<dbReference type="GO" id="GO:0005635">
    <property type="term" value="C:nuclear envelope"/>
    <property type="evidence" value="ECO:0000314"/>
    <property type="project" value="TAIR"/>
</dbReference>
<dbReference type="GO" id="GO:0005640">
    <property type="term" value="C:nuclear outer membrane"/>
    <property type="evidence" value="ECO:0000314"/>
    <property type="project" value="TAIR"/>
</dbReference>
<dbReference type="GO" id="GO:0009524">
    <property type="term" value="C:phragmoplast"/>
    <property type="evidence" value="ECO:0000314"/>
    <property type="project" value="TAIR"/>
</dbReference>
<dbReference type="GO" id="GO:0009574">
    <property type="term" value="C:preprophase band"/>
    <property type="evidence" value="ECO:0000314"/>
    <property type="project" value="TAIR"/>
</dbReference>
<dbReference type="GO" id="GO:0042393">
    <property type="term" value="F:histone binding"/>
    <property type="evidence" value="ECO:0000353"/>
    <property type="project" value="TAIR"/>
</dbReference>
<dbReference type="GO" id="GO:0034080">
    <property type="term" value="P:CENP-A containing chromatin assembly"/>
    <property type="evidence" value="ECO:0000316"/>
    <property type="project" value="TAIR"/>
</dbReference>
<dbReference type="GO" id="GO:0034508">
    <property type="term" value="P:centromere complex assembly"/>
    <property type="evidence" value="ECO:0000316"/>
    <property type="project" value="TAIR"/>
</dbReference>
<dbReference type="GO" id="GO:0033566">
    <property type="term" value="P:gamma-tubulin complex localization"/>
    <property type="evidence" value="ECO:0007669"/>
    <property type="project" value="InterPro"/>
</dbReference>
<dbReference type="GO" id="GO:0000226">
    <property type="term" value="P:microtubule cytoskeleton organization"/>
    <property type="evidence" value="ECO:0000315"/>
    <property type="project" value="TAIR"/>
</dbReference>
<dbReference type="GO" id="GO:0051418">
    <property type="term" value="P:microtubule nucleation by microtubule organizing center"/>
    <property type="evidence" value="ECO:0000314"/>
    <property type="project" value="TAIR"/>
</dbReference>
<dbReference type="GO" id="GO:0007052">
    <property type="term" value="P:mitotic spindle organization"/>
    <property type="evidence" value="ECO:0000315"/>
    <property type="project" value="TAIR"/>
</dbReference>
<dbReference type="InterPro" id="IPR022214">
    <property type="entry name" value="MZT1"/>
</dbReference>
<dbReference type="PANTHER" id="PTHR28520">
    <property type="entry name" value="MITOTIC-SPINDLE ORGANIZING PROTEIN 1"/>
    <property type="match status" value="1"/>
</dbReference>
<dbReference type="PANTHER" id="PTHR28520:SF2">
    <property type="entry name" value="MITOTIC-SPINDLE ORGANIZING PROTEIN 1"/>
    <property type="match status" value="1"/>
</dbReference>
<dbReference type="Pfam" id="PF12554">
    <property type="entry name" value="MOZART1"/>
    <property type="match status" value="1"/>
</dbReference>
<reference key="1">
    <citation type="journal article" date="1999" name="Nature">
        <title>Sequence and analysis of chromosome 4 of the plant Arabidopsis thaliana.</title>
        <authorList>
            <person name="Mayer K.F.X."/>
            <person name="Schueller C."/>
            <person name="Wambutt R."/>
            <person name="Murphy G."/>
            <person name="Volckaert G."/>
            <person name="Pohl T."/>
            <person name="Duesterhoeft A."/>
            <person name="Stiekema W."/>
            <person name="Entian K.-D."/>
            <person name="Terryn N."/>
            <person name="Harris B."/>
            <person name="Ansorge W."/>
            <person name="Brandt P."/>
            <person name="Grivell L.A."/>
            <person name="Rieger M."/>
            <person name="Weichselgartner M."/>
            <person name="de Simone V."/>
            <person name="Obermaier B."/>
            <person name="Mache R."/>
            <person name="Mueller M."/>
            <person name="Kreis M."/>
            <person name="Delseny M."/>
            <person name="Puigdomenech P."/>
            <person name="Watson M."/>
            <person name="Schmidtheini T."/>
            <person name="Reichert B."/>
            <person name="Portetelle D."/>
            <person name="Perez-Alonso M."/>
            <person name="Boutry M."/>
            <person name="Bancroft I."/>
            <person name="Vos P."/>
            <person name="Hoheisel J."/>
            <person name="Zimmermann W."/>
            <person name="Wedler H."/>
            <person name="Ridley P."/>
            <person name="Langham S.-A."/>
            <person name="McCullagh B."/>
            <person name="Bilham L."/>
            <person name="Robben J."/>
            <person name="van der Schueren J."/>
            <person name="Grymonprez B."/>
            <person name="Chuang Y.-J."/>
            <person name="Vandenbussche F."/>
            <person name="Braeken M."/>
            <person name="Weltjens I."/>
            <person name="Voet M."/>
            <person name="Bastiaens I."/>
            <person name="Aert R."/>
            <person name="Defoor E."/>
            <person name="Weitzenegger T."/>
            <person name="Bothe G."/>
            <person name="Ramsperger U."/>
            <person name="Hilbert H."/>
            <person name="Braun M."/>
            <person name="Holzer E."/>
            <person name="Brandt A."/>
            <person name="Peters S."/>
            <person name="van Staveren M."/>
            <person name="Dirkse W."/>
            <person name="Mooijman P."/>
            <person name="Klein Lankhorst R."/>
            <person name="Rose M."/>
            <person name="Hauf J."/>
            <person name="Koetter P."/>
            <person name="Berneiser S."/>
            <person name="Hempel S."/>
            <person name="Feldpausch M."/>
            <person name="Lamberth S."/>
            <person name="Van den Daele H."/>
            <person name="De Keyser A."/>
            <person name="Buysshaert C."/>
            <person name="Gielen J."/>
            <person name="Villarroel R."/>
            <person name="De Clercq R."/>
            <person name="van Montagu M."/>
            <person name="Rogers J."/>
            <person name="Cronin A."/>
            <person name="Quail M.A."/>
            <person name="Bray-Allen S."/>
            <person name="Clark L."/>
            <person name="Doggett J."/>
            <person name="Hall S."/>
            <person name="Kay M."/>
            <person name="Lennard N."/>
            <person name="McLay K."/>
            <person name="Mayes R."/>
            <person name="Pettett A."/>
            <person name="Rajandream M.A."/>
            <person name="Lyne M."/>
            <person name="Benes V."/>
            <person name="Rechmann S."/>
            <person name="Borkova D."/>
            <person name="Bloecker H."/>
            <person name="Scharfe M."/>
            <person name="Grimm M."/>
            <person name="Loehnert T.-H."/>
            <person name="Dose S."/>
            <person name="de Haan M."/>
            <person name="Maarse A.C."/>
            <person name="Schaefer M."/>
            <person name="Mueller-Auer S."/>
            <person name="Gabel C."/>
            <person name="Fuchs M."/>
            <person name="Fartmann B."/>
            <person name="Granderath K."/>
            <person name="Dauner D."/>
            <person name="Herzl A."/>
            <person name="Neumann S."/>
            <person name="Argiriou A."/>
            <person name="Vitale D."/>
            <person name="Liguori R."/>
            <person name="Piravandi E."/>
            <person name="Massenet O."/>
            <person name="Quigley F."/>
            <person name="Clabauld G."/>
            <person name="Muendlein A."/>
            <person name="Felber R."/>
            <person name="Schnabl S."/>
            <person name="Hiller R."/>
            <person name="Schmidt W."/>
            <person name="Lecharny A."/>
            <person name="Aubourg S."/>
            <person name="Chefdor F."/>
            <person name="Cooke R."/>
            <person name="Berger C."/>
            <person name="Monfort A."/>
            <person name="Casacuberta E."/>
            <person name="Gibbons T."/>
            <person name="Weber N."/>
            <person name="Vandenbol M."/>
            <person name="Bargues M."/>
            <person name="Terol J."/>
            <person name="Torres A."/>
            <person name="Perez-Perez A."/>
            <person name="Purnelle B."/>
            <person name="Bent E."/>
            <person name="Johnson S."/>
            <person name="Tacon D."/>
            <person name="Jesse T."/>
            <person name="Heijnen L."/>
            <person name="Schwarz S."/>
            <person name="Scholler P."/>
            <person name="Heber S."/>
            <person name="Francs P."/>
            <person name="Bielke C."/>
            <person name="Frishman D."/>
            <person name="Haase D."/>
            <person name="Lemcke K."/>
            <person name="Mewes H.-W."/>
            <person name="Stocker S."/>
            <person name="Zaccaria P."/>
            <person name="Bevan M."/>
            <person name="Wilson R.K."/>
            <person name="de la Bastide M."/>
            <person name="Habermann K."/>
            <person name="Parnell L."/>
            <person name="Dedhia N."/>
            <person name="Gnoj L."/>
            <person name="Schutz K."/>
            <person name="Huang E."/>
            <person name="Spiegel L."/>
            <person name="Sekhon M."/>
            <person name="Murray J."/>
            <person name="Sheet P."/>
            <person name="Cordes M."/>
            <person name="Abu-Threideh J."/>
            <person name="Stoneking T."/>
            <person name="Kalicki J."/>
            <person name="Graves T."/>
            <person name="Harmon G."/>
            <person name="Edwards J."/>
            <person name="Latreille P."/>
            <person name="Courtney L."/>
            <person name="Cloud J."/>
            <person name="Abbott A."/>
            <person name="Scott K."/>
            <person name="Johnson D."/>
            <person name="Minx P."/>
            <person name="Bentley D."/>
            <person name="Fulton B."/>
            <person name="Miller N."/>
            <person name="Greco T."/>
            <person name="Kemp K."/>
            <person name="Kramer J."/>
            <person name="Fulton L."/>
            <person name="Mardis E."/>
            <person name="Dante M."/>
            <person name="Pepin K."/>
            <person name="Hillier L.W."/>
            <person name="Nelson J."/>
            <person name="Spieth J."/>
            <person name="Ryan E."/>
            <person name="Andrews S."/>
            <person name="Geisel C."/>
            <person name="Layman D."/>
            <person name="Du H."/>
            <person name="Ali J."/>
            <person name="Berghoff A."/>
            <person name="Jones K."/>
            <person name="Drone K."/>
            <person name="Cotton M."/>
            <person name="Joshu C."/>
            <person name="Antonoiu B."/>
            <person name="Zidanic M."/>
            <person name="Strong C."/>
            <person name="Sun H."/>
            <person name="Lamar B."/>
            <person name="Yordan C."/>
            <person name="Ma P."/>
            <person name="Zhong J."/>
            <person name="Preston R."/>
            <person name="Vil D."/>
            <person name="Shekher M."/>
            <person name="Matero A."/>
            <person name="Shah R."/>
            <person name="Swaby I.K."/>
            <person name="O'Shaughnessy A."/>
            <person name="Rodriguez M."/>
            <person name="Hoffman J."/>
            <person name="Till S."/>
            <person name="Granat S."/>
            <person name="Shohdy N."/>
            <person name="Hasegawa A."/>
            <person name="Hameed A."/>
            <person name="Lodhi M."/>
            <person name="Johnson A."/>
            <person name="Chen E."/>
            <person name="Marra M.A."/>
            <person name="Martienssen R."/>
            <person name="McCombie W.R."/>
        </authorList>
    </citation>
    <scope>NUCLEOTIDE SEQUENCE [LARGE SCALE GENOMIC DNA]</scope>
    <source>
        <strain>cv. Columbia</strain>
    </source>
</reference>
<reference key="2">
    <citation type="journal article" date="2017" name="Plant J.">
        <title>Araport11: a complete reannotation of the Arabidopsis thaliana reference genome.</title>
        <authorList>
            <person name="Cheng C.Y."/>
            <person name="Krishnakumar V."/>
            <person name="Chan A.P."/>
            <person name="Thibaud-Nissen F."/>
            <person name="Schobel S."/>
            <person name="Town C.D."/>
        </authorList>
    </citation>
    <scope>GENOME REANNOTATION</scope>
    <source>
        <strain>cv. Columbia</strain>
    </source>
</reference>
<reference key="3">
    <citation type="journal article" date="2003" name="Science">
        <title>Empirical analysis of transcriptional activity in the Arabidopsis genome.</title>
        <authorList>
            <person name="Yamada K."/>
            <person name="Lim J."/>
            <person name="Dale J.M."/>
            <person name="Chen H."/>
            <person name="Shinn P."/>
            <person name="Palm C.J."/>
            <person name="Southwick A.M."/>
            <person name="Wu H.C."/>
            <person name="Kim C.J."/>
            <person name="Nguyen M."/>
            <person name="Pham P.K."/>
            <person name="Cheuk R.F."/>
            <person name="Karlin-Newmann G."/>
            <person name="Liu S.X."/>
            <person name="Lam B."/>
            <person name="Sakano H."/>
            <person name="Wu T."/>
            <person name="Yu G."/>
            <person name="Miranda M."/>
            <person name="Quach H.L."/>
            <person name="Tripp M."/>
            <person name="Chang C.H."/>
            <person name="Lee J.M."/>
            <person name="Toriumi M.J."/>
            <person name="Chan M.M."/>
            <person name="Tang C.C."/>
            <person name="Onodera C.S."/>
            <person name="Deng J.M."/>
            <person name="Akiyama K."/>
            <person name="Ansari Y."/>
            <person name="Arakawa T."/>
            <person name="Banh J."/>
            <person name="Banno F."/>
            <person name="Bowser L."/>
            <person name="Brooks S.Y."/>
            <person name="Carninci P."/>
            <person name="Chao Q."/>
            <person name="Choy N."/>
            <person name="Enju A."/>
            <person name="Goldsmith A.D."/>
            <person name="Gurjal M."/>
            <person name="Hansen N.F."/>
            <person name="Hayashizaki Y."/>
            <person name="Johnson-Hopson C."/>
            <person name="Hsuan V.W."/>
            <person name="Iida K."/>
            <person name="Karnes M."/>
            <person name="Khan S."/>
            <person name="Koesema E."/>
            <person name="Ishida J."/>
            <person name="Jiang P.X."/>
            <person name="Jones T."/>
            <person name="Kawai J."/>
            <person name="Kamiya A."/>
            <person name="Meyers C."/>
            <person name="Nakajima M."/>
            <person name="Narusaka M."/>
            <person name="Seki M."/>
            <person name="Sakurai T."/>
            <person name="Satou M."/>
            <person name="Tamse R."/>
            <person name="Vaysberg M."/>
            <person name="Wallender E.K."/>
            <person name="Wong C."/>
            <person name="Yamamura Y."/>
            <person name="Yuan S."/>
            <person name="Shinozaki K."/>
            <person name="Davis R.W."/>
            <person name="Theologis A."/>
            <person name="Ecker J.R."/>
        </authorList>
    </citation>
    <scope>NUCLEOTIDE SEQUENCE [LARGE SCALE MRNA]</scope>
    <source>
        <strain>cv. Columbia</strain>
    </source>
</reference>
<reference key="4">
    <citation type="submission" date="2004-09" db="EMBL/GenBank/DDBJ databases">
        <title>Large-scale analysis of RIKEN Arabidopsis full-length (RAFL) cDNAs.</title>
        <authorList>
            <person name="Totoki Y."/>
            <person name="Seki M."/>
            <person name="Ishida J."/>
            <person name="Nakajima M."/>
            <person name="Enju A."/>
            <person name="Kamiya A."/>
            <person name="Narusaka M."/>
            <person name="Shin-i T."/>
            <person name="Nakagawa M."/>
            <person name="Sakamoto N."/>
            <person name="Oishi K."/>
            <person name="Kohara Y."/>
            <person name="Kobayashi M."/>
            <person name="Toyoda A."/>
            <person name="Sakaki Y."/>
            <person name="Sakurai T."/>
            <person name="Iida K."/>
            <person name="Akiyama K."/>
            <person name="Satou M."/>
            <person name="Toyoda T."/>
            <person name="Konagaya A."/>
            <person name="Carninci P."/>
            <person name="Kawai J."/>
            <person name="Hayashizaki Y."/>
            <person name="Shinozaki K."/>
        </authorList>
    </citation>
    <scope>NUCLEOTIDE SEQUENCE [LARGE SCALE MRNA]</scope>
    <source>
        <strain>cv. Columbia</strain>
    </source>
</reference>
<reference key="5">
    <citation type="journal article" date="2008" name="Cell Biol. Int.">
        <title>Identification of a novel small Arabidopsis protein interacting with gamma-tubulin complex protein 3.</title>
        <authorList>
            <person name="Janski N."/>
            <person name="Herzog E."/>
            <person name="Schmit A.C."/>
        </authorList>
    </citation>
    <scope>INTERACTION WITH TUBB2/TUBB3 AND GCP3</scope>
</reference>
<reference key="6">
    <citation type="journal article" date="2012" name="Plant Cell">
        <title>The GCP3-interacting proteins GIP1 and GIP2 are required for gamma-tubulin complex protein localization, spindle integrity, and chromosomal stability.</title>
        <authorList>
            <person name="Janski N."/>
            <person name="Masoud K."/>
            <person name="Batzenschlager M."/>
            <person name="Herzog E."/>
            <person name="Evrard J.L."/>
            <person name="Houlne G."/>
            <person name="Bourge M."/>
            <person name="Chaboute M.E."/>
            <person name="Schmit A.C."/>
        </authorList>
    </citation>
    <scope>SUBUNIT</scope>
    <scope>INTERACTION WITH GCP3</scope>
    <scope>TISSUE SPECIFICITY</scope>
    <scope>SUBCELLULAR LOCATION</scope>
    <scope>DISRUPTION PHENOTYPE</scope>
</reference>
<reference key="7">
    <citation type="journal article" date="2012" name="Plant J.">
        <title>Arabidopsis GCP3-interacting protein 1/MOZART 1 is an integral component of the gamma-tubulin-containing microtubule nucleating complex.</title>
        <authorList>
            <person name="Nakamura M."/>
            <person name="Yagi N."/>
            <person name="Kato T."/>
            <person name="Fujita S."/>
            <person name="Kawashima N."/>
            <person name="Ehrhardt D.W."/>
            <person name="Hashimoto T."/>
        </authorList>
    </citation>
    <scope>DISRUPTION PHENOTYPE</scope>
    <scope>SUBUNIT</scope>
    <scope>INTERACTION WITH GCP3</scope>
    <scope>SUBCELLULAR LOCATION</scope>
    <scope>TISSUE SPECIFICITY</scope>
</reference>
<reference key="8">
    <citation type="journal article" date="2013" name="Front. Plant Sci.">
        <title>The GIP gamma-tubulin complex-associated proteins are involved in nuclear architecture in Arabidopsis thaliana.</title>
        <authorList>
            <person name="Batzenschlager M."/>
            <person name="Masoud K."/>
            <person name="Janski N."/>
            <person name="Houlne G."/>
            <person name="Herzog E."/>
            <person name="Evrard J.L."/>
            <person name="Baumberger N."/>
            <person name="Erhardt M."/>
            <person name="Nomine Y."/>
            <person name="Kieffer B."/>
            <person name="Schmit A.C."/>
            <person name="Chaboute M.E."/>
        </authorList>
    </citation>
    <scope>3D-STRUCTURE MODELING</scope>
    <scope>INTERACTION WITH TSA1 AND GIP2</scope>
    <scope>SUBUNIT</scope>
</reference>
<feature type="chain" id="PRO_0000365720" description="Mitotic-spindle organizing protein 1B">
    <location>
        <begin position="1"/>
        <end position="71"/>
    </location>
</feature>
<organism>
    <name type="scientific">Arabidopsis thaliana</name>
    <name type="common">Mouse-ear cress</name>
    <dbReference type="NCBI Taxonomy" id="3702"/>
    <lineage>
        <taxon>Eukaryota</taxon>
        <taxon>Viridiplantae</taxon>
        <taxon>Streptophyta</taxon>
        <taxon>Embryophyta</taxon>
        <taxon>Tracheophyta</taxon>
        <taxon>Spermatophyta</taxon>
        <taxon>Magnoliopsida</taxon>
        <taxon>eudicotyledons</taxon>
        <taxon>Gunneridae</taxon>
        <taxon>Pentapetalae</taxon>
        <taxon>rosids</taxon>
        <taxon>malvids</taxon>
        <taxon>Brassicales</taxon>
        <taxon>Brassicaceae</taxon>
        <taxon>Camelineae</taxon>
        <taxon>Arabidopsis</taxon>
    </lineage>
</organism>
<name>MZT1B_ARATH</name>
<protein>
    <recommendedName>
        <fullName>Mitotic-spindle organizing protein 1B</fullName>
    </recommendedName>
    <alternativeName>
        <fullName>GCP3-interacting protein 1</fullName>
        <shortName>AtGIP1</shortName>
    </alternativeName>
    <alternativeName>
        <fullName>Mitotic-spindle organizing protein associated with a ring of gamma-tubulin 1B</fullName>
        <shortName>AtGIP1B</shortName>
    </alternativeName>
</protein>
<sequence>MDEEASRTARESLELVFRMSNILDTGLDRHTLSVLIALCDLGVNPEALATVVKELRRESIPDSVTTTPSIH</sequence>
<accession>Q9M0N8</accession>
<evidence type="ECO:0000250" key="1"/>
<evidence type="ECO:0000250" key="2">
    <source>
        <dbReference type="UniProtKB" id="Q08AG7"/>
    </source>
</evidence>
<evidence type="ECO:0000269" key="3">
    <source>
    </source>
</evidence>
<evidence type="ECO:0000269" key="4">
    <source>
    </source>
</evidence>
<evidence type="ECO:0000269" key="5">
    <source>
    </source>
</evidence>
<evidence type="ECO:0000269" key="6">
    <source>
    </source>
</evidence>
<evidence type="ECO:0000305" key="7"/>
<proteinExistence type="evidence at protein level"/>
<keyword id="KW-0963">Cytoplasm</keyword>
<keyword id="KW-0206">Cytoskeleton</keyword>
<keyword id="KW-0493">Microtubule</keyword>
<keyword id="KW-0539">Nucleus</keyword>
<keyword id="KW-1185">Reference proteome</keyword>